<feature type="chain" id="PRO_1000164235" description="Chaperone protein DnaJ">
    <location>
        <begin position="1"/>
        <end position="380"/>
    </location>
</feature>
<feature type="domain" description="J" evidence="1">
    <location>
        <begin position="5"/>
        <end position="70"/>
    </location>
</feature>
<feature type="repeat" description="CXXCXGXG motif">
    <location>
        <begin position="154"/>
        <end position="161"/>
    </location>
</feature>
<feature type="repeat" description="CXXCXGXG motif">
    <location>
        <begin position="171"/>
        <end position="178"/>
    </location>
</feature>
<feature type="repeat" description="CXXCXGXG motif">
    <location>
        <begin position="193"/>
        <end position="200"/>
    </location>
</feature>
<feature type="repeat" description="CXXCXGXG motif">
    <location>
        <begin position="207"/>
        <end position="214"/>
    </location>
</feature>
<feature type="zinc finger region" description="CR-type" evidence="1">
    <location>
        <begin position="141"/>
        <end position="219"/>
    </location>
</feature>
<feature type="binding site" evidence="1">
    <location>
        <position position="154"/>
    </location>
    <ligand>
        <name>Zn(2+)</name>
        <dbReference type="ChEBI" id="CHEBI:29105"/>
        <label>1</label>
    </ligand>
</feature>
<feature type="binding site" evidence="1">
    <location>
        <position position="157"/>
    </location>
    <ligand>
        <name>Zn(2+)</name>
        <dbReference type="ChEBI" id="CHEBI:29105"/>
        <label>1</label>
    </ligand>
</feature>
<feature type="binding site" evidence="1">
    <location>
        <position position="171"/>
    </location>
    <ligand>
        <name>Zn(2+)</name>
        <dbReference type="ChEBI" id="CHEBI:29105"/>
        <label>2</label>
    </ligand>
</feature>
<feature type="binding site" evidence="1">
    <location>
        <position position="174"/>
    </location>
    <ligand>
        <name>Zn(2+)</name>
        <dbReference type="ChEBI" id="CHEBI:29105"/>
        <label>2</label>
    </ligand>
</feature>
<feature type="binding site" evidence="1">
    <location>
        <position position="193"/>
    </location>
    <ligand>
        <name>Zn(2+)</name>
        <dbReference type="ChEBI" id="CHEBI:29105"/>
        <label>2</label>
    </ligand>
</feature>
<feature type="binding site" evidence="1">
    <location>
        <position position="196"/>
    </location>
    <ligand>
        <name>Zn(2+)</name>
        <dbReference type="ChEBI" id="CHEBI:29105"/>
        <label>2</label>
    </ligand>
</feature>
<feature type="binding site" evidence="1">
    <location>
        <position position="207"/>
    </location>
    <ligand>
        <name>Zn(2+)</name>
        <dbReference type="ChEBI" id="CHEBI:29105"/>
        <label>1</label>
    </ligand>
</feature>
<feature type="binding site" evidence="1">
    <location>
        <position position="210"/>
    </location>
    <ligand>
        <name>Zn(2+)</name>
        <dbReference type="ChEBI" id="CHEBI:29105"/>
        <label>1</label>
    </ligand>
</feature>
<evidence type="ECO:0000255" key="1">
    <source>
        <dbReference type="HAMAP-Rule" id="MF_01152"/>
    </source>
</evidence>
<sequence>MAKADFYETLGVSKTADEKELKSAFRKLAMKFHPDKNPGDAESERKFKEINEAYETLKDPQKRAAYDRFGHAAFEQGGMGSAGGGGGFAGGGFSDIFEDIFGEMMGGGRGGNARGRSTGGRERGADLRYNMEISLEEAFTGKTAQIRVPTSITCEVCSGSGAKPGTKPTTCATCQGSGRVRAAQGFFSIERTCPTCQGRGQTISDPCGKCHGQGRVTEERQLSVSIPSGIEDGTRIRLQGEGEAGLRGGPSGDLYIFLSVKPHQFFQREGADLYCSVPISMTTAALGGTFDVTTLDGTKSRVTVPEGTQPGKQFRLKGKGMPVLRSAQMGDLYIQIQIETPQKLTKRQRELLQEFDQISSKENNPESTGFFARMKEFFEG</sequence>
<accession>B9JZ89</accession>
<comment type="function">
    <text evidence="1">Participates actively in the response to hyperosmotic and heat shock by preventing the aggregation of stress-denatured proteins and by disaggregating proteins, also in an autonomous, DnaK-independent fashion. Unfolded proteins bind initially to DnaJ; upon interaction with the DnaJ-bound protein, DnaK hydrolyzes its bound ATP, resulting in the formation of a stable complex. GrpE releases ADP from DnaK; ATP binding to DnaK triggers the release of the substrate protein, thus completing the reaction cycle. Several rounds of ATP-dependent interactions between DnaJ, DnaK and GrpE are required for fully efficient folding. Also involved, together with DnaK and GrpE, in the DNA replication of plasmids through activation of initiation proteins.</text>
</comment>
<comment type="cofactor">
    <cofactor evidence="1">
        <name>Zn(2+)</name>
        <dbReference type="ChEBI" id="CHEBI:29105"/>
    </cofactor>
    <text evidence="1">Binds 2 Zn(2+) ions per monomer.</text>
</comment>
<comment type="subunit">
    <text evidence="1">Homodimer.</text>
</comment>
<comment type="subcellular location">
    <subcellularLocation>
        <location evidence="1">Cytoplasm</location>
    </subcellularLocation>
</comment>
<comment type="domain">
    <text evidence="1">The J domain is necessary and sufficient to stimulate DnaK ATPase activity. Zinc center 1 plays an important role in the autonomous, DnaK-independent chaperone activity of DnaJ. Zinc center 2 is essential for interaction with DnaK and for DnaJ activity.</text>
</comment>
<comment type="similarity">
    <text evidence="1">Belongs to the DnaJ family.</text>
</comment>
<name>DNAJ_ALLAM</name>
<keyword id="KW-0143">Chaperone</keyword>
<keyword id="KW-0963">Cytoplasm</keyword>
<keyword id="KW-0235">DNA replication</keyword>
<keyword id="KW-0479">Metal-binding</keyword>
<keyword id="KW-1185">Reference proteome</keyword>
<keyword id="KW-0677">Repeat</keyword>
<keyword id="KW-0346">Stress response</keyword>
<keyword id="KW-0862">Zinc</keyword>
<keyword id="KW-0863">Zinc-finger</keyword>
<protein>
    <recommendedName>
        <fullName evidence="1">Chaperone protein DnaJ</fullName>
    </recommendedName>
</protein>
<dbReference type="EMBL" id="CP000633">
    <property type="protein sequence ID" value="ACM35201.1"/>
    <property type="molecule type" value="Genomic_DNA"/>
</dbReference>
<dbReference type="RefSeq" id="WP_012654731.1">
    <property type="nucleotide sequence ID" value="NC_011989.1"/>
</dbReference>
<dbReference type="SMR" id="B9JZ89"/>
<dbReference type="STRING" id="311402.Avi_0308"/>
<dbReference type="KEGG" id="avi:Avi_0308"/>
<dbReference type="eggNOG" id="COG0484">
    <property type="taxonomic scope" value="Bacteria"/>
</dbReference>
<dbReference type="HOGENOM" id="CLU_017633_0_7_5"/>
<dbReference type="Proteomes" id="UP000001596">
    <property type="component" value="Chromosome 1"/>
</dbReference>
<dbReference type="GO" id="GO:0005737">
    <property type="term" value="C:cytoplasm"/>
    <property type="evidence" value="ECO:0007669"/>
    <property type="project" value="UniProtKB-SubCell"/>
</dbReference>
<dbReference type="GO" id="GO:0005524">
    <property type="term" value="F:ATP binding"/>
    <property type="evidence" value="ECO:0007669"/>
    <property type="project" value="InterPro"/>
</dbReference>
<dbReference type="GO" id="GO:0031072">
    <property type="term" value="F:heat shock protein binding"/>
    <property type="evidence" value="ECO:0007669"/>
    <property type="project" value="InterPro"/>
</dbReference>
<dbReference type="GO" id="GO:0051082">
    <property type="term" value="F:unfolded protein binding"/>
    <property type="evidence" value="ECO:0007669"/>
    <property type="project" value="UniProtKB-UniRule"/>
</dbReference>
<dbReference type="GO" id="GO:0008270">
    <property type="term" value="F:zinc ion binding"/>
    <property type="evidence" value="ECO:0007669"/>
    <property type="project" value="UniProtKB-UniRule"/>
</dbReference>
<dbReference type="GO" id="GO:0051085">
    <property type="term" value="P:chaperone cofactor-dependent protein refolding"/>
    <property type="evidence" value="ECO:0007669"/>
    <property type="project" value="TreeGrafter"/>
</dbReference>
<dbReference type="GO" id="GO:0006260">
    <property type="term" value="P:DNA replication"/>
    <property type="evidence" value="ECO:0007669"/>
    <property type="project" value="UniProtKB-KW"/>
</dbReference>
<dbReference type="GO" id="GO:0042026">
    <property type="term" value="P:protein refolding"/>
    <property type="evidence" value="ECO:0007669"/>
    <property type="project" value="TreeGrafter"/>
</dbReference>
<dbReference type="GO" id="GO:0009408">
    <property type="term" value="P:response to heat"/>
    <property type="evidence" value="ECO:0007669"/>
    <property type="project" value="InterPro"/>
</dbReference>
<dbReference type="CDD" id="cd06257">
    <property type="entry name" value="DnaJ"/>
    <property type="match status" value="1"/>
</dbReference>
<dbReference type="CDD" id="cd10747">
    <property type="entry name" value="DnaJ_C"/>
    <property type="match status" value="1"/>
</dbReference>
<dbReference type="CDD" id="cd10719">
    <property type="entry name" value="DnaJ_zf"/>
    <property type="match status" value="1"/>
</dbReference>
<dbReference type="FunFam" id="1.10.287.110:FF:000034">
    <property type="entry name" value="Chaperone protein DnaJ"/>
    <property type="match status" value="1"/>
</dbReference>
<dbReference type="FunFam" id="2.10.230.10:FF:000002">
    <property type="entry name" value="Molecular chaperone DnaJ"/>
    <property type="match status" value="1"/>
</dbReference>
<dbReference type="FunFam" id="2.60.260.20:FF:000004">
    <property type="entry name" value="Molecular chaperone DnaJ"/>
    <property type="match status" value="1"/>
</dbReference>
<dbReference type="Gene3D" id="1.10.287.110">
    <property type="entry name" value="DnaJ domain"/>
    <property type="match status" value="1"/>
</dbReference>
<dbReference type="Gene3D" id="2.10.230.10">
    <property type="entry name" value="Heat shock protein DnaJ, cysteine-rich domain"/>
    <property type="match status" value="1"/>
</dbReference>
<dbReference type="Gene3D" id="2.60.260.20">
    <property type="entry name" value="Urease metallochaperone UreE, N-terminal domain"/>
    <property type="match status" value="2"/>
</dbReference>
<dbReference type="HAMAP" id="MF_01152">
    <property type="entry name" value="DnaJ"/>
    <property type="match status" value="1"/>
</dbReference>
<dbReference type="InterPro" id="IPR012724">
    <property type="entry name" value="DnaJ"/>
</dbReference>
<dbReference type="InterPro" id="IPR002939">
    <property type="entry name" value="DnaJ_C"/>
</dbReference>
<dbReference type="InterPro" id="IPR001623">
    <property type="entry name" value="DnaJ_domain"/>
</dbReference>
<dbReference type="InterPro" id="IPR018253">
    <property type="entry name" value="DnaJ_domain_CS"/>
</dbReference>
<dbReference type="InterPro" id="IPR008971">
    <property type="entry name" value="HSP40/DnaJ_pept-bd"/>
</dbReference>
<dbReference type="InterPro" id="IPR001305">
    <property type="entry name" value="HSP_DnaJ_Cys-rich_dom"/>
</dbReference>
<dbReference type="InterPro" id="IPR036410">
    <property type="entry name" value="HSP_DnaJ_Cys-rich_dom_sf"/>
</dbReference>
<dbReference type="InterPro" id="IPR036869">
    <property type="entry name" value="J_dom_sf"/>
</dbReference>
<dbReference type="NCBIfam" id="TIGR02349">
    <property type="entry name" value="DnaJ_bact"/>
    <property type="match status" value="1"/>
</dbReference>
<dbReference type="NCBIfam" id="NF008035">
    <property type="entry name" value="PRK10767.1"/>
    <property type="match status" value="1"/>
</dbReference>
<dbReference type="PANTHER" id="PTHR43096:SF48">
    <property type="entry name" value="CHAPERONE PROTEIN DNAJ"/>
    <property type="match status" value="1"/>
</dbReference>
<dbReference type="PANTHER" id="PTHR43096">
    <property type="entry name" value="DNAJ HOMOLOG 1, MITOCHONDRIAL-RELATED"/>
    <property type="match status" value="1"/>
</dbReference>
<dbReference type="Pfam" id="PF00226">
    <property type="entry name" value="DnaJ"/>
    <property type="match status" value="1"/>
</dbReference>
<dbReference type="Pfam" id="PF01556">
    <property type="entry name" value="DnaJ_C"/>
    <property type="match status" value="1"/>
</dbReference>
<dbReference type="Pfam" id="PF00684">
    <property type="entry name" value="DnaJ_CXXCXGXG"/>
    <property type="match status" value="1"/>
</dbReference>
<dbReference type="PRINTS" id="PR00625">
    <property type="entry name" value="JDOMAIN"/>
</dbReference>
<dbReference type="SMART" id="SM00271">
    <property type="entry name" value="DnaJ"/>
    <property type="match status" value="1"/>
</dbReference>
<dbReference type="SUPFAM" id="SSF46565">
    <property type="entry name" value="Chaperone J-domain"/>
    <property type="match status" value="1"/>
</dbReference>
<dbReference type="SUPFAM" id="SSF57938">
    <property type="entry name" value="DnaJ/Hsp40 cysteine-rich domain"/>
    <property type="match status" value="1"/>
</dbReference>
<dbReference type="SUPFAM" id="SSF49493">
    <property type="entry name" value="HSP40/DnaJ peptide-binding domain"/>
    <property type="match status" value="2"/>
</dbReference>
<dbReference type="PROSITE" id="PS00636">
    <property type="entry name" value="DNAJ_1"/>
    <property type="match status" value="1"/>
</dbReference>
<dbReference type="PROSITE" id="PS50076">
    <property type="entry name" value="DNAJ_2"/>
    <property type="match status" value="1"/>
</dbReference>
<dbReference type="PROSITE" id="PS51188">
    <property type="entry name" value="ZF_CR"/>
    <property type="match status" value="1"/>
</dbReference>
<reference key="1">
    <citation type="journal article" date="2009" name="J. Bacteriol.">
        <title>Genome sequences of three Agrobacterium biovars help elucidate the evolution of multichromosome genomes in bacteria.</title>
        <authorList>
            <person name="Slater S.C."/>
            <person name="Goldman B.S."/>
            <person name="Goodner B."/>
            <person name="Setubal J.C."/>
            <person name="Farrand S.K."/>
            <person name="Nester E.W."/>
            <person name="Burr T.J."/>
            <person name="Banta L."/>
            <person name="Dickerman A.W."/>
            <person name="Paulsen I."/>
            <person name="Otten L."/>
            <person name="Suen G."/>
            <person name="Welch R."/>
            <person name="Almeida N.F."/>
            <person name="Arnold F."/>
            <person name="Burton O.T."/>
            <person name="Du Z."/>
            <person name="Ewing A."/>
            <person name="Godsy E."/>
            <person name="Heisel S."/>
            <person name="Houmiel K.L."/>
            <person name="Jhaveri J."/>
            <person name="Lu J."/>
            <person name="Miller N.M."/>
            <person name="Norton S."/>
            <person name="Chen Q."/>
            <person name="Phoolcharoen W."/>
            <person name="Ohlin V."/>
            <person name="Ondrusek D."/>
            <person name="Pride N."/>
            <person name="Stricklin S.L."/>
            <person name="Sun J."/>
            <person name="Wheeler C."/>
            <person name="Wilson L."/>
            <person name="Zhu H."/>
            <person name="Wood D.W."/>
        </authorList>
    </citation>
    <scope>NUCLEOTIDE SEQUENCE [LARGE SCALE GENOMIC DNA]</scope>
    <source>
        <strain>ATCC BAA-846 / DSM 112012 / S4</strain>
    </source>
</reference>
<proteinExistence type="inferred from homology"/>
<organism>
    <name type="scientific">Allorhizobium ampelinum (strain ATCC BAA-846 / DSM 112012 / S4)</name>
    <name type="common">Agrobacterium vitis (strain S4)</name>
    <dbReference type="NCBI Taxonomy" id="311402"/>
    <lineage>
        <taxon>Bacteria</taxon>
        <taxon>Pseudomonadati</taxon>
        <taxon>Pseudomonadota</taxon>
        <taxon>Alphaproteobacteria</taxon>
        <taxon>Hyphomicrobiales</taxon>
        <taxon>Rhizobiaceae</taxon>
        <taxon>Rhizobium/Agrobacterium group</taxon>
        <taxon>Allorhizobium</taxon>
        <taxon>Allorhizobium ampelinum</taxon>
    </lineage>
</organism>
<gene>
    <name evidence="1" type="primary">dnaJ</name>
    <name type="ordered locus">Avi_0308</name>
</gene>